<proteinExistence type="evidence at protein level"/>
<feature type="chain" id="PRO_0000437669" description="Integrator complex subunit 2">
    <location>
        <begin position="1"/>
        <end position="1105"/>
    </location>
</feature>
<feature type="transmembrane region" description="Helical" evidence="2">
    <location>
        <begin position="822"/>
        <end position="842"/>
    </location>
</feature>
<dbReference type="EMBL" id="AE014298">
    <property type="protein sequence ID" value="AAF48750.2"/>
    <property type="molecule type" value="Genomic_DNA"/>
</dbReference>
<dbReference type="EMBL" id="BT016049">
    <property type="protein sequence ID" value="AAV36934.1"/>
    <property type="molecule type" value="mRNA"/>
</dbReference>
<dbReference type="RefSeq" id="NP_573232.1">
    <property type="nucleotide sequence ID" value="NM_133004.2"/>
</dbReference>
<dbReference type="SMR" id="Q9VX31"/>
<dbReference type="FunCoup" id="Q9VX31">
    <property type="interactions" value="3116"/>
</dbReference>
<dbReference type="IntAct" id="Q9VX31">
    <property type="interactions" value="1"/>
</dbReference>
<dbReference type="STRING" id="7227.FBpp0074254"/>
<dbReference type="GlyGen" id="Q9VX31">
    <property type="glycosylation" value="1 site"/>
</dbReference>
<dbReference type="PaxDb" id="7227-FBpp0074254"/>
<dbReference type="DNASU" id="32745"/>
<dbReference type="EnsemblMetazoa" id="FBtr0074480">
    <property type="protein sequence ID" value="FBpp0074254"/>
    <property type="gene ID" value="FBgn0030858"/>
</dbReference>
<dbReference type="GeneID" id="32745"/>
<dbReference type="KEGG" id="dme:Dmel_CG8211"/>
<dbReference type="UCSC" id="CG8211-RA">
    <property type="organism name" value="d. melanogaster"/>
</dbReference>
<dbReference type="AGR" id="FB:FBgn0030858"/>
<dbReference type="CTD" id="57508"/>
<dbReference type="FlyBase" id="FBgn0030858">
    <property type="gene designation" value="IntS2"/>
</dbReference>
<dbReference type="VEuPathDB" id="VectorBase:FBgn0030858"/>
<dbReference type="eggNOG" id="ENOG502QSP2">
    <property type="taxonomic scope" value="Eukaryota"/>
</dbReference>
<dbReference type="GeneTree" id="ENSGT00390000011888"/>
<dbReference type="HOGENOM" id="CLU_007707_0_0_1"/>
<dbReference type="InParanoid" id="Q9VX31"/>
<dbReference type="OMA" id="IISNYPH"/>
<dbReference type="OrthoDB" id="70899at2759"/>
<dbReference type="PhylomeDB" id="Q9VX31"/>
<dbReference type="Reactome" id="R-DME-6807505">
    <property type="pathway name" value="RNA polymerase II transcribes snRNA genes"/>
</dbReference>
<dbReference type="BioGRID-ORCS" id="32745">
    <property type="hits" value="1 hit in 1 CRISPR screen"/>
</dbReference>
<dbReference type="GenomeRNAi" id="32745"/>
<dbReference type="PRO" id="PR:Q9VX31"/>
<dbReference type="Proteomes" id="UP000000803">
    <property type="component" value="Chromosome X"/>
</dbReference>
<dbReference type="Bgee" id="FBgn0030858">
    <property type="expression patterns" value="Expressed in egg cell and 42 other cell types or tissues"/>
</dbReference>
<dbReference type="GO" id="GO:0005737">
    <property type="term" value="C:cytoplasm"/>
    <property type="evidence" value="ECO:0000250"/>
    <property type="project" value="UniProtKB"/>
</dbReference>
<dbReference type="GO" id="GO:0160232">
    <property type="term" value="C:INTAC complex"/>
    <property type="evidence" value="ECO:0000314"/>
    <property type="project" value="UniProtKB"/>
</dbReference>
<dbReference type="GO" id="GO:0032039">
    <property type="term" value="C:integrator complex"/>
    <property type="evidence" value="ECO:0000314"/>
    <property type="project" value="UniProtKB"/>
</dbReference>
<dbReference type="GO" id="GO:0031965">
    <property type="term" value="C:nuclear membrane"/>
    <property type="evidence" value="ECO:0007669"/>
    <property type="project" value="UniProtKB-SubCell"/>
</dbReference>
<dbReference type="GO" id="GO:0005634">
    <property type="term" value="C:nucleus"/>
    <property type="evidence" value="ECO:0000314"/>
    <property type="project" value="FlyBase"/>
</dbReference>
<dbReference type="GO" id="GO:0010628">
    <property type="term" value="P:positive regulation of gene expression"/>
    <property type="evidence" value="ECO:0000315"/>
    <property type="project" value="FlyBase"/>
</dbReference>
<dbReference type="GO" id="GO:0045666">
    <property type="term" value="P:positive regulation of neuron differentiation"/>
    <property type="evidence" value="ECO:0000315"/>
    <property type="project" value="FlyBase"/>
</dbReference>
<dbReference type="GO" id="GO:0160240">
    <property type="term" value="P:RNA polymerase II transcription initiation surveillance"/>
    <property type="evidence" value="ECO:0000314"/>
    <property type="project" value="UniProtKB"/>
</dbReference>
<dbReference type="GO" id="GO:0034472">
    <property type="term" value="P:snRNA 3'-end processing"/>
    <property type="evidence" value="ECO:0000314"/>
    <property type="project" value="FlyBase"/>
</dbReference>
<dbReference type="GO" id="GO:0016180">
    <property type="term" value="P:snRNA processing"/>
    <property type="evidence" value="ECO:0000250"/>
    <property type="project" value="FlyBase"/>
</dbReference>
<dbReference type="InterPro" id="IPR026236">
    <property type="entry name" value="Int2_metazoa"/>
</dbReference>
<dbReference type="InterPro" id="IPR029321">
    <property type="entry name" value="INTS2"/>
</dbReference>
<dbReference type="PANTHER" id="PTHR28608">
    <property type="entry name" value="INTEGRATOR COMPLEX SUBUNIT 2"/>
    <property type="match status" value="1"/>
</dbReference>
<dbReference type="PANTHER" id="PTHR28608:SF1">
    <property type="entry name" value="INTEGRATOR COMPLEX SUBUNIT 2"/>
    <property type="match status" value="1"/>
</dbReference>
<dbReference type="Pfam" id="PF14750">
    <property type="entry name" value="INTS2"/>
    <property type="match status" value="1"/>
</dbReference>
<dbReference type="PRINTS" id="PR02105">
    <property type="entry name" value="INTSUBUNIT2"/>
</dbReference>
<name>INT2_DROME</name>
<organism evidence="14">
    <name type="scientific">Drosophila melanogaster</name>
    <name type="common">Fruit fly</name>
    <dbReference type="NCBI Taxonomy" id="7227"/>
    <lineage>
        <taxon>Eukaryota</taxon>
        <taxon>Metazoa</taxon>
        <taxon>Ecdysozoa</taxon>
        <taxon>Arthropoda</taxon>
        <taxon>Hexapoda</taxon>
        <taxon>Insecta</taxon>
        <taxon>Pterygota</taxon>
        <taxon>Neoptera</taxon>
        <taxon>Endopterygota</taxon>
        <taxon>Diptera</taxon>
        <taxon>Brachycera</taxon>
        <taxon>Muscomorpha</taxon>
        <taxon>Ephydroidea</taxon>
        <taxon>Drosophilidae</taxon>
        <taxon>Drosophila</taxon>
        <taxon>Sophophora</taxon>
    </lineage>
</organism>
<keyword id="KW-0472">Membrane</keyword>
<keyword id="KW-0539">Nucleus</keyword>
<keyword id="KW-1185">Reference proteome</keyword>
<keyword id="KW-0812">Transmembrane</keyword>
<keyword id="KW-1133">Transmembrane helix</keyword>
<sequence length="1105" mass="124890">MPVRMYDVSPRVFCAMQNLDITLLASYPEAEIRPVLPSLVRMSLLSPLDNTESSMESRKEILAVLIGIEVVNSIVSYLQVNYHELENELKKELQARQKSAFFEGQQHEYGLQSGIALGFERADVARKVRVVLSEIFNLQQQVSEQKPAAHSEMLDDGIYLEEVVDILCIALAELPSLLNILELTDALVHVPNGHRIICALVANFPDCYRDVVSHVIANCDEDGSDGKHRLMLLMGLSEMNPSQALANRSMCVDMLKVPSFMLKLTLKHPEDLIAFLTGLLLGNDQNLRSWFAAYIRSSQKRKGDALNLVRVELLQKVIQTTTNAAELRDFNLQGAVLLRLYCALRGIGGLKFNDDEINALSQLVTSCPQATPSGVRFVTLALCMLIACPSLVSTIPLENKAVEWLQWLIREDAFFCKRPGTSTSLGEMLLLLAIHFHSNQISAISEMVCSTLAMKIPIRPNSTNRIKQLFTQDLFTEQVVALHAVRVPVTPNLNGTILCYLPVHCIQQLLKSRTFLKHKVPIKSWIFKQICSSVRPVHPVMPALVEVFVNTLIIPNPTGKVNIDHMHRPFTEAEILHVFRTSKLTFFAEELPPMAESQELNQIEVTCPLTAQLLMIYYLMLYEDTRLMNLSALGGRKQKEYSNNFLGGLPLKYLLQKAHHYHNDYLSLFHPLLRLIISNYPHLSMVDDWLEEHNLAQGNSTVVVSKHELKPETLDRALAAIQTKPHLAIRVFKQLLQMPPETQAQYGQQLVKHLPMVFAKSVPRYVKDLYNDIWLRLNAVLPTTLWIMSLRAITNGSDTMDRRTFANESLLEPMEVLSCPRFVFCSPYLLMILLRILKGSLAASKTYLNVHMQMQQKQVLDKNGMMQTDAIWEDLRTTLIASQESAAVHILLEVLDYIASKATDRVSHLELREIQGIIGTYVHQAFISEPSLAKLVHFQTYPKSVIPMMVASVPSMHICIDFVHEFLNVTEMEKQIFTIDLTSHLVLNYSIPKSLGVSKFCLNVIQTTLSMLTASTKCRFLRNVMPAMVRFVETFPILADDCVNILMTTGRILHSQSSLGMTTMEMPLTDSDKLCTYRDAQLHIIMIEDAFKALVTAVMKKSDLY</sequence>
<reference evidence="14" key="1">
    <citation type="journal article" date="2000" name="Science">
        <title>The genome sequence of Drosophila melanogaster.</title>
        <authorList>
            <person name="Adams M.D."/>
            <person name="Celniker S.E."/>
            <person name="Holt R.A."/>
            <person name="Evans C.A."/>
            <person name="Gocayne J.D."/>
            <person name="Amanatides P.G."/>
            <person name="Scherer S.E."/>
            <person name="Li P.W."/>
            <person name="Hoskins R.A."/>
            <person name="Galle R.F."/>
            <person name="George R.A."/>
            <person name="Lewis S.E."/>
            <person name="Richards S."/>
            <person name="Ashburner M."/>
            <person name="Henderson S.N."/>
            <person name="Sutton G.G."/>
            <person name="Wortman J.R."/>
            <person name="Yandell M.D."/>
            <person name="Zhang Q."/>
            <person name="Chen L.X."/>
            <person name="Brandon R.C."/>
            <person name="Rogers Y.-H.C."/>
            <person name="Blazej R.G."/>
            <person name="Champe M."/>
            <person name="Pfeiffer B.D."/>
            <person name="Wan K.H."/>
            <person name="Doyle C."/>
            <person name="Baxter E.G."/>
            <person name="Helt G."/>
            <person name="Nelson C.R."/>
            <person name="Miklos G.L.G."/>
            <person name="Abril J.F."/>
            <person name="Agbayani A."/>
            <person name="An H.-J."/>
            <person name="Andrews-Pfannkoch C."/>
            <person name="Baldwin D."/>
            <person name="Ballew R.M."/>
            <person name="Basu A."/>
            <person name="Baxendale J."/>
            <person name="Bayraktaroglu L."/>
            <person name="Beasley E.M."/>
            <person name="Beeson K.Y."/>
            <person name="Benos P.V."/>
            <person name="Berman B.P."/>
            <person name="Bhandari D."/>
            <person name="Bolshakov S."/>
            <person name="Borkova D."/>
            <person name="Botchan M.R."/>
            <person name="Bouck J."/>
            <person name="Brokstein P."/>
            <person name="Brottier P."/>
            <person name="Burtis K.C."/>
            <person name="Busam D.A."/>
            <person name="Butler H."/>
            <person name="Cadieu E."/>
            <person name="Center A."/>
            <person name="Chandra I."/>
            <person name="Cherry J.M."/>
            <person name="Cawley S."/>
            <person name="Dahlke C."/>
            <person name="Davenport L.B."/>
            <person name="Davies P."/>
            <person name="de Pablos B."/>
            <person name="Delcher A."/>
            <person name="Deng Z."/>
            <person name="Mays A.D."/>
            <person name="Dew I."/>
            <person name="Dietz S.M."/>
            <person name="Dodson K."/>
            <person name="Doup L.E."/>
            <person name="Downes M."/>
            <person name="Dugan-Rocha S."/>
            <person name="Dunkov B.C."/>
            <person name="Dunn P."/>
            <person name="Durbin K.J."/>
            <person name="Evangelista C.C."/>
            <person name="Ferraz C."/>
            <person name="Ferriera S."/>
            <person name="Fleischmann W."/>
            <person name="Fosler C."/>
            <person name="Gabrielian A.E."/>
            <person name="Garg N.S."/>
            <person name="Gelbart W.M."/>
            <person name="Glasser K."/>
            <person name="Glodek A."/>
            <person name="Gong F."/>
            <person name="Gorrell J.H."/>
            <person name="Gu Z."/>
            <person name="Guan P."/>
            <person name="Harris M."/>
            <person name="Harris N.L."/>
            <person name="Harvey D.A."/>
            <person name="Heiman T.J."/>
            <person name="Hernandez J.R."/>
            <person name="Houck J."/>
            <person name="Hostin D."/>
            <person name="Houston K.A."/>
            <person name="Howland T.J."/>
            <person name="Wei M.-H."/>
            <person name="Ibegwam C."/>
            <person name="Jalali M."/>
            <person name="Kalush F."/>
            <person name="Karpen G.H."/>
            <person name="Ke Z."/>
            <person name="Kennison J.A."/>
            <person name="Ketchum K.A."/>
            <person name="Kimmel B.E."/>
            <person name="Kodira C.D."/>
            <person name="Kraft C.L."/>
            <person name="Kravitz S."/>
            <person name="Kulp D."/>
            <person name="Lai Z."/>
            <person name="Lasko P."/>
            <person name="Lei Y."/>
            <person name="Levitsky A.A."/>
            <person name="Li J.H."/>
            <person name="Li Z."/>
            <person name="Liang Y."/>
            <person name="Lin X."/>
            <person name="Liu X."/>
            <person name="Mattei B."/>
            <person name="McIntosh T.C."/>
            <person name="McLeod M.P."/>
            <person name="McPherson D."/>
            <person name="Merkulov G."/>
            <person name="Milshina N.V."/>
            <person name="Mobarry C."/>
            <person name="Morris J."/>
            <person name="Moshrefi A."/>
            <person name="Mount S.M."/>
            <person name="Moy M."/>
            <person name="Murphy B."/>
            <person name="Murphy L."/>
            <person name="Muzny D.M."/>
            <person name="Nelson D.L."/>
            <person name="Nelson D.R."/>
            <person name="Nelson K.A."/>
            <person name="Nixon K."/>
            <person name="Nusskern D.R."/>
            <person name="Pacleb J.M."/>
            <person name="Palazzolo M."/>
            <person name="Pittman G.S."/>
            <person name="Pan S."/>
            <person name="Pollard J."/>
            <person name="Puri V."/>
            <person name="Reese M.G."/>
            <person name="Reinert K."/>
            <person name="Remington K."/>
            <person name="Saunders R.D.C."/>
            <person name="Scheeler F."/>
            <person name="Shen H."/>
            <person name="Shue B.C."/>
            <person name="Siden-Kiamos I."/>
            <person name="Simpson M."/>
            <person name="Skupski M.P."/>
            <person name="Smith T.J."/>
            <person name="Spier E."/>
            <person name="Spradling A.C."/>
            <person name="Stapleton M."/>
            <person name="Strong R."/>
            <person name="Sun E."/>
            <person name="Svirskas R."/>
            <person name="Tector C."/>
            <person name="Turner R."/>
            <person name="Venter E."/>
            <person name="Wang A.H."/>
            <person name="Wang X."/>
            <person name="Wang Z.-Y."/>
            <person name="Wassarman D.A."/>
            <person name="Weinstock G.M."/>
            <person name="Weissenbach J."/>
            <person name="Williams S.M."/>
            <person name="Woodage T."/>
            <person name="Worley K.C."/>
            <person name="Wu D."/>
            <person name="Yang S."/>
            <person name="Yao Q.A."/>
            <person name="Ye J."/>
            <person name="Yeh R.-F."/>
            <person name="Zaveri J.S."/>
            <person name="Zhan M."/>
            <person name="Zhang G."/>
            <person name="Zhao Q."/>
            <person name="Zheng L."/>
            <person name="Zheng X.H."/>
            <person name="Zhong F.N."/>
            <person name="Zhong W."/>
            <person name="Zhou X."/>
            <person name="Zhu S.C."/>
            <person name="Zhu X."/>
            <person name="Smith H.O."/>
            <person name="Gibbs R.A."/>
            <person name="Myers E.W."/>
            <person name="Rubin G.M."/>
            <person name="Venter J.C."/>
        </authorList>
    </citation>
    <scope>NUCLEOTIDE SEQUENCE [LARGE SCALE GENOMIC DNA]</scope>
    <source>
        <strain evidence="14">Berkeley</strain>
    </source>
</reference>
<reference evidence="14" key="2">
    <citation type="journal article" date="2002" name="Genome Biol.">
        <title>Annotation of the Drosophila melanogaster euchromatic genome: a systematic review.</title>
        <authorList>
            <person name="Misra S."/>
            <person name="Crosby M.A."/>
            <person name="Mungall C.J."/>
            <person name="Matthews B.B."/>
            <person name="Campbell K.S."/>
            <person name="Hradecky P."/>
            <person name="Huang Y."/>
            <person name="Kaminker J.S."/>
            <person name="Millburn G.H."/>
            <person name="Prochnik S.E."/>
            <person name="Smith C.D."/>
            <person name="Tupy J.L."/>
            <person name="Whitfield E.J."/>
            <person name="Bayraktaroglu L."/>
            <person name="Berman B.P."/>
            <person name="Bettencourt B.R."/>
            <person name="Celniker S.E."/>
            <person name="de Grey A.D.N.J."/>
            <person name="Drysdale R.A."/>
            <person name="Harris N.L."/>
            <person name="Richter J."/>
            <person name="Russo S."/>
            <person name="Schroeder A.J."/>
            <person name="Shu S.Q."/>
            <person name="Stapleton M."/>
            <person name="Yamada C."/>
            <person name="Ashburner M."/>
            <person name="Gelbart W.M."/>
            <person name="Rubin G.M."/>
            <person name="Lewis S.E."/>
        </authorList>
    </citation>
    <scope>GENOME REANNOTATION</scope>
    <source>
        <strain evidence="14">Berkeley</strain>
    </source>
</reference>
<reference evidence="12" key="3">
    <citation type="submission" date="2004-10" db="EMBL/GenBank/DDBJ databases">
        <authorList>
            <person name="Stapleton M."/>
            <person name="Carlson J."/>
            <person name="Chavez C."/>
            <person name="Frise E."/>
            <person name="George R."/>
            <person name="Pacleb J."/>
            <person name="Park S."/>
            <person name="Wan K."/>
            <person name="Yu C."/>
            <person name="Rubin G.M."/>
            <person name="Celniker S."/>
        </authorList>
    </citation>
    <scope>NUCLEOTIDE SEQUENCE [LARGE SCALE MRNA]</scope>
    <source>
        <strain evidence="12">Berkeley</strain>
    </source>
</reference>
<reference evidence="11" key="4">
    <citation type="journal article" date="2011" name="Mol. Cell. Biol.">
        <title>A subset of Drosophila integrator proteins is essential for efficient U7 snRNA and spliceosomal snRNA 3'-end formation.</title>
        <authorList>
            <person name="Ezzeddine N."/>
            <person name="Chen J."/>
            <person name="Waltenspiel B."/>
            <person name="Burch B."/>
            <person name="Albrecht T."/>
            <person name="Zhuo M."/>
            <person name="Warren W.D."/>
            <person name="Marzluff W.F."/>
            <person name="Wagner E.J."/>
        </authorList>
    </citation>
    <scope>FUNCTION</scope>
</reference>
<reference evidence="11" key="5">
    <citation type="journal article" date="2012" name="RNA">
        <title>An RNAi screen identifies additional members of the Drosophila Integrator complex and a requirement for cyclin C/Cdk8 in snRNA 3'-end formation.</title>
        <authorList>
            <person name="Chen J."/>
            <person name="Ezzeddine N."/>
            <person name="Waltenspiel B."/>
            <person name="Albrecht T.R."/>
            <person name="Warren W.D."/>
            <person name="Marzluff W.F."/>
            <person name="Wagner E.J."/>
        </authorList>
    </citation>
    <scope>FUNCTION</scope>
    <scope>SUBUNIT</scope>
</reference>
<reference key="6">
    <citation type="journal article" date="2019" name="Genes Dev.">
        <title>The Integrator complex cleaves nascent mRNAs to attenuate transcription.</title>
        <authorList>
            <person name="Tatomer D.C."/>
            <person name="Elrod N.D."/>
            <person name="Liang D."/>
            <person name="Xiao M.S."/>
            <person name="Jiang J.Z."/>
            <person name="Jonathan M."/>
            <person name="Huang K.L."/>
            <person name="Wagner E.J."/>
            <person name="Cherry S."/>
            <person name="Wilusz J.E."/>
        </authorList>
    </citation>
    <scope>IDENTIFICATION IN THE INTEGRATOR COMPLEX</scope>
</reference>
<reference key="7">
    <citation type="journal article" date="2020" name="Mol. Cell">
        <title>Integrator recruits protein phosphatase 2A to prevent pause release and facilitate transcription termination.</title>
        <authorList>
            <person name="Huang K.L."/>
            <person name="Jee D."/>
            <person name="Stein C.B."/>
            <person name="Elrod N.D."/>
            <person name="Henriques T."/>
            <person name="Mascibroda L.G."/>
            <person name="Baillat D."/>
            <person name="Russell W.K."/>
            <person name="Adelman K."/>
            <person name="Wagner E.J."/>
        </authorList>
    </citation>
    <scope>FUNCTION</scope>
    <scope>IDENTIFICATION IN THE INTAC COMPLEX</scope>
</reference>
<reference key="8">
    <citation type="journal article" date="2023" name="Mol. Cell">
        <title>IntS6 and the Integrator phosphatase module tune the efficiency of select premature transcription termination events.</title>
        <authorList>
            <person name="Fujiwara R."/>
            <person name="Zhai S.N."/>
            <person name="Liang D."/>
            <person name="Shah A.P."/>
            <person name="Tracey M."/>
            <person name="Ma X.K."/>
            <person name="Fields C.J."/>
            <person name="Mendoza-Figueroa M.S."/>
            <person name="Meline M.C."/>
            <person name="Tatomer D.C."/>
            <person name="Yang L."/>
            <person name="Wilusz J.E."/>
        </authorList>
    </citation>
    <scope>IDENTIFICATION IN THE INTAC COMPLEX</scope>
</reference>
<reference key="9">
    <citation type="journal article" date="2024" name="Mol. Cell">
        <title>Cytoplasmic binding partners of the Integrator endonuclease INTS11 and its paralog CPSF73 are required for their nuclear function.</title>
        <authorList>
            <person name="Lin M.H."/>
            <person name="Jensen M.K."/>
            <person name="Elrod N.D."/>
            <person name="Chu H.F."/>
            <person name="Haseley M."/>
            <person name="Beam A.C."/>
            <person name="Huang K.L."/>
            <person name="Chiang W."/>
            <person name="Russell W.K."/>
            <person name="Williams K."/>
            <person name="Proschel C."/>
            <person name="Wagner E.J."/>
            <person name="Tong L."/>
        </authorList>
    </citation>
    <scope>IDENTIFICATION IN THE INTEGRATOR COMPLEX</scope>
    <scope>SUBCELLULAR LOCATION</scope>
</reference>
<accession>Q9VX31</accession>
<comment type="function">
    <text evidence="3 4 6">Component of the integrator complex, a multiprotein complex that terminates RNA polymerase II (Pol II) transcription in the promoter-proximal region of genes (PubMed:21078872, PubMed:23097424, PubMed:32966759). The integrator complex provides a quality checkpoint during transcription elongation by driving premature transcription termination of transcripts that are unfavorably configured for transcriptional elongation: the complex terminates transcription by (1) catalyzing dephosphorylation of the C-terminal domain (CTD) of Pol II subunit Polr2A/Rbp1 and Spt5, and (2) degrading the exiting nascent RNA transcript via endonuclease activity (PubMed:32966759). The integrator complex is also involved in the 3'-end processing of the U7 snRNA, and also the spliceosomal snRNAs U1, U2, U4 and U5 (PubMed:21078872, PubMed:23097424).</text>
</comment>
<comment type="subunit">
    <text evidence="4 5 6 7 8">Belongs to the multiprotein complex Integrator, at least composed of IntS1, IntS2, IntS3, IntS4, omd/IntS5, IntS6, defl/IntS7, IntS8, IntS9, IntS10, IntS11, IntS12, asun/IntS13, IntS14 and IntS15 (PubMed:23097424, PubMed:31530651, PubMed:32966759, PubMed:37995689, PubMed:39032490). The core complex associates with protein phosphatase 2A subunits mts/PP2A and Pp2A-29B, to form the Integrator-PP2A (INTAC) complex (PubMed:32966759, PubMed:37995689).</text>
</comment>
<comment type="subcellular location">
    <subcellularLocation>
        <location evidence="1">Nucleus membrane</location>
        <topology evidence="2">Single-pass membrane protein</topology>
    </subcellularLocation>
    <subcellularLocation>
        <location evidence="8">Nucleus</location>
    </subcellularLocation>
</comment>
<comment type="similarity">
    <text evidence="11">Belongs to the Integrator subunit 2 family.</text>
</comment>
<evidence type="ECO:0000250" key="1">
    <source>
        <dbReference type="UniProtKB" id="Q9H0H0"/>
    </source>
</evidence>
<evidence type="ECO:0000255" key="2"/>
<evidence type="ECO:0000269" key="3">
    <source>
    </source>
</evidence>
<evidence type="ECO:0000269" key="4">
    <source>
    </source>
</evidence>
<evidence type="ECO:0000269" key="5">
    <source>
    </source>
</evidence>
<evidence type="ECO:0000269" key="6">
    <source>
    </source>
</evidence>
<evidence type="ECO:0000269" key="7">
    <source>
    </source>
</evidence>
<evidence type="ECO:0000269" key="8">
    <source>
    </source>
</evidence>
<evidence type="ECO:0000303" key="9">
    <source>
    </source>
</evidence>
<evidence type="ECO:0000303" key="10">
    <source>
    </source>
</evidence>
<evidence type="ECO:0000305" key="11"/>
<evidence type="ECO:0000312" key="12">
    <source>
        <dbReference type="EMBL" id="AAV36934.1"/>
    </source>
</evidence>
<evidence type="ECO:0000312" key="13">
    <source>
        <dbReference type="FlyBase" id="FBgn0030858"/>
    </source>
</evidence>
<evidence type="ECO:0000312" key="14">
    <source>
        <dbReference type="Proteomes" id="UP000000803"/>
    </source>
</evidence>
<gene>
    <name evidence="10 13" type="primary">IntS2</name>
    <name evidence="13" type="ORF">CG8211</name>
</gene>
<protein>
    <recommendedName>
        <fullName evidence="9">Integrator complex subunit 2</fullName>
    </recommendedName>
</protein>